<sequence length="270" mass="30723">MLLNVLRICIIVCLVNDGAGKHSEGRERTKTYSLNSRGYFRKERGARRSKILLVNTKGLDEPHIGHGDFGLVAELFDSTRTHTNRKEPDMNKVKLFSTVAHGNKSARRKAYNGSRRNIFSRRSFDKRNTEVTEKPGAKMFWNNFLVKMNGAPQNTSHGSKAQEIMKEACKTLPFTQNIVHENCDRMVIQNNLCFGKCISLHVPNQQDRRNTCSHCLPSKFTLNHLTLNCTGSKNVVKVVMMVEECTCEAHKSNFHQTAQFNMDTSTTLHH</sequence>
<name>CER1_XENLA</name>
<protein>
    <recommendedName>
        <fullName>Cerberus</fullName>
        <shortName>Cer</shortName>
    </recommendedName>
    <alternativeName>
        <fullName>Xcer</fullName>
    </alternativeName>
    <component>
        <recommendedName>
            <fullName>Cerberus long</fullName>
            <shortName>Cer-L</shortName>
        </recommendedName>
    </component>
    <component>
        <recommendedName>
            <fullName>Cerberus short</fullName>
            <shortName>Cer-S</shortName>
        </recommendedName>
    </component>
</protein>
<dbReference type="EMBL" id="U64831">
    <property type="protein sequence ID" value="AAC60012.1"/>
    <property type="molecule type" value="mRNA"/>
</dbReference>
<dbReference type="EMBL" id="AB086394">
    <property type="protein sequence ID" value="BAC54274.1"/>
    <property type="molecule type" value="Genomic_DNA"/>
</dbReference>
<dbReference type="EMBL" id="BC081277">
    <property type="protein sequence ID" value="AAH81277.1"/>
    <property type="status" value="ALT_INIT"/>
    <property type="molecule type" value="mRNA"/>
</dbReference>
<dbReference type="PIR" id="S71793">
    <property type="entry name" value="S71793"/>
</dbReference>
<dbReference type="RefSeq" id="NP_001081800.1">
    <property type="nucleotide sequence ID" value="NM_001088331.2"/>
</dbReference>
<dbReference type="SMR" id="P70041"/>
<dbReference type="GlyCosmos" id="P70041">
    <property type="glycosylation" value="4 sites, No reported glycans"/>
</dbReference>
<dbReference type="DNASU" id="398060"/>
<dbReference type="GeneID" id="398060"/>
<dbReference type="KEGG" id="xla:398060"/>
<dbReference type="AGR" id="Xenbase:XB-GENE-865019"/>
<dbReference type="CTD" id="398060"/>
<dbReference type="Xenbase" id="XB-GENE-865019">
    <property type="gene designation" value="cer1.S"/>
</dbReference>
<dbReference type="OrthoDB" id="9950584at2759"/>
<dbReference type="Proteomes" id="UP000186698">
    <property type="component" value="Chromosome 1S"/>
</dbReference>
<dbReference type="Bgee" id="398060">
    <property type="expression patterns" value="Expressed in gastrula and 5 other cell types or tissues"/>
</dbReference>
<dbReference type="GO" id="GO:0005576">
    <property type="term" value="C:extracellular region"/>
    <property type="evidence" value="ECO:0000314"/>
    <property type="project" value="UniProtKB"/>
</dbReference>
<dbReference type="GO" id="GO:0005615">
    <property type="term" value="C:extracellular space"/>
    <property type="evidence" value="ECO:0000318"/>
    <property type="project" value="GO_Central"/>
</dbReference>
<dbReference type="GO" id="GO:0036122">
    <property type="term" value="F:BMP binding"/>
    <property type="evidence" value="ECO:0000353"/>
    <property type="project" value="UniProtKB"/>
</dbReference>
<dbReference type="GO" id="GO:0016015">
    <property type="term" value="F:morphogen activity"/>
    <property type="evidence" value="ECO:0000318"/>
    <property type="project" value="GO_Central"/>
</dbReference>
<dbReference type="GO" id="GO:0038100">
    <property type="term" value="F:nodal binding"/>
    <property type="evidence" value="ECO:0000353"/>
    <property type="project" value="UniProtKB"/>
</dbReference>
<dbReference type="GO" id="GO:0017147">
    <property type="term" value="F:Wnt-protein binding"/>
    <property type="evidence" value="ECO:0000353"/>
    <property type="project" value="UniProtKB"/>
</dbReference>
<dbReference type="GO" id="GO:0009948">
    <property type="term" value="P:anterior/posterior axis specification"/>
    <property type="evidence" value="ECO:0000315"/>
    <property type="project" value="UniProtKB"/>
</dbReference>
<dbReference type="GO" id="GO:0030154">
    <property type="term" value="P:cell differentiation"/>
    <property type="evidence" value="ECO:0007669"/>
    <property type="project" value="UniProtKB-KW"/>
</dbReference>
<dbReference type="GO" id="GO:0007166">
    <property type="term" value="P:cell surface receptor signaling pathway"/>
    <property type="evidence" value="ECO:0000316"/>
    <property type="project" value="UniProtKB"/>
</dbReference>
<dbReference type="GO" id="GO:0048263">
    <property type="term" value="P:determination of dorsal identity"/>
    <property type="evidence" value="ECO:0000250"/>
    <property type="project" value="BHF-UCL"/>
</dbReference>
<dbReference type="GO" id="GO:0061371">
    <property type="term" value="P:determination of heart left/right asymmetry"/>
    <property type="evidence" value="ECO:0000318"/>
    <property type="project" value="GO_Central"/>
</dbReference>
<dbReference type="GO" id="GO:1900116">
    <property type="term" value="P:extracellular negative regulation of signal transduction"/>
    <property type="evidence" value="ECO:0000316"/>
    <property type="project" value="UniProtKB"/>
</dbReference>
<dbReference type="GO" id="GO:0007369">
    <property type="term" value="P:gastrulation"/>
    <property type="evidence" value="ECO:0007669"/>
    <property type="project" value="UniProtKB-KW"/>
</dbReference>
<dbReference type="GO" id="GO:0007507">
    <property type="term" value="P:heart development"/>
    <property type="evidence" value="ECO:0000315"/>
    <property type="project" value="UniProtKB"/>
</dbReference>
<dbReference type="GO" id="GO:0032926">
    <property type="term" value="P:negative regulation of activin receptor signaling pathway"/>
    <property type="evidence" value="ECO:0000250"/>
    <property type="project" value="BHF-UCL"/>
</dbReference>
<dbReference type="GO" id="GO:0030514">
    <property type="term" value="P:negative regulation of BMP signaling pathway"/>
    <property type="evidence" value="ECO:0000314"/>
    <property type="project" value="UniProtKB"/>
</dbReference>
<dbReference type="GO" id="GO:2000381">
    <property type="term" value="P:negative regulation of mesoderm development"/>
    <property type="evidence" value="ECO:0000250"/>
    <property type="project" value="BHF-UCL"/>
</dbReference>
<dbReference type="GO" id="GO:1900108">
    <property type="term" value="P:negative regulation of nodal signaling pathway"/>
    <property type="evidence" value="ECO:0000316"/>
    <property type="project" value="UniProtKB"/>
</dbReference>
<dbReference type="GO" id="GO:0030178">
    <property type="term" value="P:negative regulation of Wnt signaling pathway"/>
    <property type="evidence" value="ECO:0000314"/>
    <property type="project" value="UniProtKB"/>
</dbReference>
<dbReference type="GO" id="GO:0007399">
    <property type="term" value="P:nervous system development"/>
    <property type="evidence" value="ECO:0000315"/>
    <property type="project" value="UniProtKB"/>
</dbReference>
<dbReference type="GO" id="GO:0035582">
    <property type="term" value="P:sequestering of BMP in extracellular matrix"/>
    <property type="evidence" value="ECO:0000318"/>
    <property type="project" value="GO_Central"/>
</dbReference>
<dbReference type="GO" id="GO:0023019">
    <property type="term" value="P:signal transduction involved in regulation of gene expression"/>
    <property type="evidence" value="ECO:0000318"/>
    <property type="project" value="GO_Central"/>
</dbReference>
<dbReference type="GO" id="GO:0016055">
    <property type="term" value="P:Wnt signaling pathway"/>
    <property type="evidence" value="ECO:0007669"/>
    <property type="project" value="UniProtKB-KW"/>
</dbReference>
<dbReference type="Gene3D" id="2.10.90.10">
    <property type="entry name" value="Cystine-knot cytokines"/>
    <property type="match status" value="1"/>
</dbReference>
<dbReference type="InterPro" id="IPR016860">
    <property type="entry name" value="Cerberus"/>
</dbReference>
<dbReference type="InterPro" id="IPR006207">
    <property type="entry name" value="Cys_knot_C"/>
</dbReference>
<dbReference type="InterPro" id="IPR029034">
    <property type="entry name" value="Cystine-knot_cytokine"/>
</dbReference>
<dbReference type="InterPro" id="IPR004133">
    <property type="entry name" value="DAN"/>
</dbReference>
<dbReference type="PANTHER" id="PTHR15273:SF7">
    <property type="entry name" value="CERBERUS"/>
    <property type="match status" value="1"/>
</dbReference>
<dbReference type="PANTHER" id="PTHR15273">
    <property type="entry name" value="DAN DOMAIN FAMILY MEMBER 5"/>
    <property type="match status" value="1"/>
</dbReference>
<dbReference type="Pfam" id="PF03045">
    <property type="entry name" value="DAN"/>
    <property type="match status" value="1"/>
</dbReference>
<dbReference type="SMART" id="SM00041">
    <property type="entry name" value="CT"/>
    <property type="match status" value="1"/>
</dbReference>
<dbReference type="PROSITE" id="PS01225">
    <property type="entry name" value="CTCK_2"/>
    <property type="match status" value="1"/>
</dbReference>
<accession>P70041</accession>
<accession>Q66IN4</accession>
<gene>
    <name evidence="1" type="primary">cer1</name>
    <name evidence="12" type="synonym">cer</name>
</gene>
<organism>
    <name type="scientific">Xenopus laevis</name>
    <name type="common">African clawed frog</name>
    <dbReference type="NCBI Taxonomy" id="8355"/>
    <lineage>
        <taxon>Eukaryota</taxon>
        <taxon>Metazoa</taxon>
        <taxon>Chordata</taxon>
        <taxon>Craniata</taxon>
        <taxon>Vertebrata</taxon>
        <taxon>Euteleostomi</taxon>
        <taxon>Amphibia</taxon>
        <taxon>Batrachia</taxon>
        <taxon>Anura</taxon>
        <taxon>Pipoidea</taxon>
        <taxon>Pipidae</taxon>
        <taxon>Xenopodinae</taxon>
        <taxon>Xenopus</taxon>
        <taxon>Xenopus</taxon>
    </lineage>
</organism>
<evidence type="ECO:0000250" key="1">
    <source>
        <dbReference type="UniProtKB" id="O55233"/>
    </source>
</evidence>
<evidence type="ECO:0000255" key="2"/>
<evidence type="ECO:0000255" key="3">
    <source>
        <dbReference type="PROSITE-ProRule" id="PRU00039"/>
    </source>
</evidence>
<evidence type="ECO:0000269" key="4">
    <source>
    </source>
</evidence>
<evidence type="ECO:0000269" key="5">
    <source>
    </source>
</evidence>
<evidence type="ECO:0000269" key="6">
    <source>
    </source>
</evidence>
<evidence type="ECO:0000269" key="7">
    <source>
    </source>
</evidence>
<evidence type="ECO:0000269" key="8">
    <source>
    </source>
</evidence>
<evidence type="ECO:0000269" key="9">
    <source>
    </source>
</evidence>
<evidence type="ECO:0000269" key="10">
    <source>
    </source>
</evidence>
<evidence type="ECO:0000305" key="11"/>
<evidence type="ECO:0000312" key="12">
    <source>
        <dbReference type="EMBL" id="AAC60012.1"/>
    </source>
</evidence>
<evidence type="ECO:0000312" key="13">
    <source>
        <dbReference type="EMBL" id="AAH81277.1"/>
    </source>
</evidence>
<evidence type="ECO:0000312" key="14">
    <source>
        <dbReference type="EMBL" id="BAC54274.1"/>
    </source>
</evidence>
<proteinExistence type="evidence at protein level"/>
<reference evidence="11 12" key="1">
    <citation type="journal article" date="1996" name="Nature">
        <title>Cerberus is a head-inducing secreted factor expressed in the anterior endoderm of Spemann's organizer.</title>
        <authorList>
            <person name="Bouwmeester T."/>
            <person name="Kim S.-H."/>
            <person name="Sasai Y."/>
            <person name="Lu B."/>
            <person name="De Robertis E.M."/>
        </authorList>
    </citation>
    <scope>NUCLEOTIDE SEQUENCE [MRNA]</scope>
    <scope>FUNCTION</scope>
    <scope>SUBCELLULAR LOCATION</scope>
    <scope>TISSUE SPECIFICITY</scope>
    <scope>DEVELOPMENTAL STAGE</scope>
    <source>
        <tissue evidence="10">Dorsal lip</tissue>
    </source>
</reference>
<reference evidence="11 14" key="2">
    <citation type="journal article" date="2003" name="Dev. Biol.">
        <title>Molecular link in the sequential induction of the Spemann organizer: direct activation of the cerberus gene by Xlim-1, Xotx2, Mix.1, and Siamois, immediately downstream from Nodal and Wnt signaling.</title>
        <authorList>
            <person name="Yamamoto S."/>
            <person name="Hikasa H."/>
            <person name="Ono H."/>
            <person name="Taira M."/>
        </authorList>
    </citation>
    <scope>NUCLEOTIDE SEQUENCE [GENOMIC DNA]</scope>
    <scope>INDUCTION</scope>
</reference>
<reference evidence="13" key="3">
    <citation type="submission" date="2004-08" db="EMBL/GenBank/DDBJ databases">
        <authorList>
            <consortium name="NIH - Xenopus Gene Collection (XGC) project"/>
        </authorList>
    </citation>
    <scope>NUCLEOTIDE SEQUENCE [LARGE SCALE MRNA]</scope>
    <source>
        <tissue evidence="13">Embryo</tissue>
    </source>
</reference>
<reference evidence="11" key="4">
    <citation type="journal article" date="1999" name="Nature">
        <title>The head inducer Cerberus is a multifunctional antagonist of Nodal, BMP and Wnt signals.</title>
        <authorList>
            <person name="Piccolo S."/>
            <person name="Agius E."/>
            <person name="Leyns L."/>
            <person name="Bhattacharyya S."/>
            <person name="Grunz H."/>
            <person name="Bouwmeester T."/>
            <person name="De Robertis E.M."/>
        </authorList>
    </citation>
    <scope>FUNCTION</scope>
    <scope>INTERACTION WITH BMP4; NODAL AND WNT8</scope>
</reference>
<reference evidence="11" key="5">
    <citation type="journal article" date="2003" name="Development">
        <title>Endogenous Cerberus activity is required for anterior head specification in Xenopus.</title>
        <authorList>
            <person name="Silva A.C."/>
            <person name="Filipe M."/>
            <person name="Kuerner K.M."/>
            <person name="Steinbeisser H."/>
            <person name="Belo J.A."/>
        </authorList>
    </citation>
    <scope>FUNCTION</scope>
</reference>
<reference evidence="11" key="6">
    <citation type="journal article" date="2003" name="Dev. Biol.">
        <title>Coordination of BMP-3b and cerberus is required for head formation of Xenopus embryos.</title>
        <authorList>
            <person name="Hino J."/>
            <person name="Nishimatsu S."/>
            <person name="Nagai T."/>
            <person name="Matsuo H."/>
            <person name="Kangawa K."/>
            <person name="Nohno T."/>
        </authorList>
    </citation>
    <scope>FUNCTION</scope>
</reference>
<reference evidence="11" key="7">
    <citation type="journal article" date="2004" name="PLoS Biol.">
        <title>Neural induction in Xenopus: requirement for ectodermal and endomesodermal signals via Chordin, Noggin, beta-Catenin, and Cerberus.</title>
        <authorList>
            <person name="Kuroda H."/>
            <person name="Wessely O."/>
            <person name="De Robertis E.M."/>
        </authorList>
    </citation>
    <scope>FUNCTION</scope>
    <scope>TISSUE SPECIFICITY</scope>
</reference>
<reference evidence="11" key="8">
    <citation type="journal article" date="2007" name="Dev. Biol.">
        <title>Multiple functions of Cerberus cooperate to induce heart downstream of Nodal.</title>
        <authorList>
            <person name="Foley A.C."/>
            <person name="Korol O."/>
            <person name="Timmer A.M."/>
            <person name="Mercola M."/>
        </authorList>
    </citation>
    <scope>FUNCTION</scope>
    <scope>INDUCTION</scope>
</reference>
<keyword id="KW-0165">Cleavage on pair of basic residues</keyword>
<keyword id="KW-0217">Developmental protein</keyword>
<keyword id="KW-0221">Differentiation</keyword>
<keyword id="KW-1015">Disulfide bond</keyword>
<keyword id="KW-0306">Gastrulation</keyword>
<keyword id="KW-0325">Glycoprotein</keyword>
<keyword id="KW-0524">Neurogenesis</keyword>
<keyword id="KW-1185">Reference proteome</keyword>
<keyword id="KW-0964">Secreted</keyword>
<keyword id="KW-0732">Signal</keyword>
<keyword id="KW-0879">Wnt signaling pathway</keyword>
<comment type="function">
    <text evidence="4 6 7 8 9 10">Inhibits wnt, nodal/nr-1 and bmp signaling in the embryo to promote head formation and anterior neural induction. Within the endoderm, acts as an essential mediator of nodal/nr-1-induced cardiogenesis in the overlying mesoderm.</text>
</comment>
<comment type="subunit">
    <text evidence="4">The long chain interacts with nodal/nr-1, bmp4 and wnt8, thereby inhibiting their function. The short chain interacts with nodal/nr-1 but not bmp4 or wnt8.</text>
</comment>
<comment type="subcellular location">
    <subcellularLocation>
        <location evidence="10">Secreted</location>
    </subcellularLocation>
</comment>
<comment type="tissue specificity">
    <text evidence="8 10">A component of the Nieuwkoop signaling center in the blastula. Expressed transiently in a broad anterior domain of the gastrula, including the anterior endoderm of the Spemann's organizer and more laterally the cardiac primordia. Expression is excluded from the prospective prechordal plate region and the ring of cells that give rise to the trunk-tail mesoderm.</text>
</comment>
<comment type="developmental stage">
    <text evidence="10">Expressed both maternally and zygotically. Zygotic expression increases at stage 10 (early gastrula), continues during gastrula and early neurula stages before rapidly declining during neurulation.</text>
</comment>
<comment type="induction">
    <text evidence="5 9">By nodal/nr-1 signaling and wnt8 signaling including the downstream effectors mix-A/mix.1 and siamois acting synergistically with either lhx1/lim1 or otx2. Also by acvr1b/alk4.</text>
</comment>
<comment type="miscellaneous">
    <text evidence="10">Microinjection of cer1 into blastomeres results in the formation of ectopic heads that contain cyclopic eyes as well as duplicated internal organs such as liver and heart. The heart beats at a rhythm different to that of the primary heart. Based on this phenotype the name 'cerberus' was chosen after a mythological guardian dog with multiple heads.</text>
</comment>
<comment type="similarity">
    <text evidence="2">Belongs to the DAN family.</text>
</comment>
<comment type="sequence caution" evidence="11">
    <conflict type="erroneous initiation">
        <sequence resource="EMBL-CDS" id="AAH81277"/>
    </conflict>
</comment>
<feature type="signal peptide" evidence="2">
    <location>
        <begin position="1"/>
        <end position="20"/>
    </location>
</feature>
<feature type="chain" id="PRO_0000273281" description="Cerberus long">
    <location>
        <begin position="21"/>
        <end position="270"/>
    </location>
</feature>
<feature type="chain" id="PRO_0000273282" description="Cerberus short">
    <location>
        <begin position="110"/>
        <end position="270"/>
    </location>
</feature>
<feature type="domain" description="CTCK" evidence="3">
    <location>
        <begin position="169"/>
        <end position="253"/>
    </location>
</feature>
<feature type="glycosylation site" description="N-linked (GlcNAc...) asparagine" evidence="2">
    <location>
        <position position="103"/>
    </location>
</feature>
<feature type="glycosylation site" description="N-linked (GlcNAc...) asparagine" evidence="2">
    <location>
        <position position="112"/>
    </location>
</feature>
<feature type="glycosylation site" description="N-linked (GlcNAc...) asparagine" evidence="2">
    <location>
        <position position="154"/>
    </location>
</feature>
<feature type="glycosylation site" description="N-linked (GlcNAc...) asparagine" evidence="2">
    <location>
        <position position="228"/>
    </location>
</feature>
<feature type="disulfide bond" evidence="3">
    <location>
        <begin position="169"/>
        <end position="215"/>
    </location>
</feature>
<feature type="disulfide bond" evidence="3">
    <location>
        <begin position="183"/>
        <end position="229"/>
    </location>
</feature>
<feature type="disulfide bond" evidence="3">
    <location>
        <begin position="193"/>
        <end position="245"/>
    </location>
</feature>
<feature type="disulfide bond" evidence="3">
    <location>
        <begin position="197"/>
        <end position="247"/>
    </location>
</feature>